<accession>Q9ZMM0</accession>
<feature type="chain" id="PRO_0000375591" description="Succinyl-diaminopimelate desuccinylase">
    <location>
        <begin position="1"/>
        <end position="388"/>
    </location>
</feature>
<feature type="active site" evidence="1">
    <location>
        <position position="86"/>
    </location>
</feature>
<feature type="active site" description="Proton acceptor" evidence="1">
    <location>
        <position position="146"/>
    </location>
</feature>
<feature type="binding site" evidence="1">
    <location>
        <position position="84"/>
    </location>
    <ligand>
        <name>Zn(2+)</name>
        <dbReference type="ChEBI" id="CHEBI:29105"/>
        <label>1</label>
    </ligand>
</feature>
<feature type="binding site" evidence="1">
    <location>
        <position position="115"/>
    </location>
    <ligand>
        <name>Zn(2+)</name>
        <dbReference type="ChEBI" id="CHEBI:29105"/>
        <label>1</label>
    </ligand>
</feature>
<feature type="binding site" evidence="1">
    <location>
        <position position="115"/>
    </location>
    <ligand>
        <name>Zn(2+)</name>
        <dbReference type="ChEBI" id="CHEBI:29105"/>
        <label>2</label>
    </ligand>
</feature>
<feature type="binding site" evidence="1">
    <location>
        <position position="147"/>
    </location>
    <ligand>
        <name>Zn(2+)</name>
        <dbReference type="ChEBI" id="CHEBI:29105"/>
        <label>2</label>
    </ligand>
</feature>
<feature type="binding site" evidence="1">
    <location>
        <position position="175"/>
    </location>
    <ligand>
        <name>Zn(2+)</name>
        <dbReference type="ChEBI" id="CHEBI:29105"/>
        <label>1</label>
    </ligand>
</feature>
<feature type="binding site" evidence="1">
    <location>
        <position position="360"/>
    </location>
    <ligand>
        <name>Zn(2+)</name>
        <dbReference type="ChEBI" id="CHEBI:29105"/>
        <label>2</label>
    </ligand>
</feature>
<reference key="1">
    <citation type="journal article" date="1999" name="Nature">
        <title>Genomic sequence comparison of two unrelated isolates of the human gastric pathogen Helicobacter pylori.</title>
        <authorList>
            <person name="Alm R.A."/>
            <person name="Ling L.-S.L."/>
            <person name="Moir D.T."/>
            <person name="King B.L."/>
            <person name="Brown E.D."/>
            <person name="Doig P.C."/>
            <person name="Smith D.R."/>
            <person name="Noonan B."/>
            <person name="Guild B.C."/>
            <person name="deJonge B.L."/>
            <person name="Carmel G."/>
            <person name="Tummino P.J."/>
            <person name="Caruso A."/>
            <person name="Uria-Nickelsen M."/>
            <person name="Mills D.M."/>
            <person name="Ives C."/>
            <person name="Gibson R."/>
            <person name="Merberg D."/>
            <person name="Mills S.D."/>
            <person name="Jiang Q."/>
            <person name="Taylor D.E."/>
            <person name="Vovis G.F."/>
            <person name="Trust T.J."/>
        </authorList>
    </citation>
    <scope>NUCLEOTIDE SEQUENCE [LARGE SCALE GENOMIC DNA]</scope>
    <source>
        <strain>J99 / ATCC 700824</strain>
    </source>
</reference>
<sequence>MDALEITQKLISYPTITPKECGIFEYIKSLFPAFKTLECEKNGVKNLFLYRIFNPLKKHAEKEHAKEKHVKENVKPLHFCFAGHIDVVPPGNNWQSDPFKPIIKEGFLYGRGAQDMKGGVGAFLSASLNFNPKTPFLLSILLTSDEEGPGIFGTRLMLEKLKEKDLLPHMAIVAEPTCEKVLGDSIKIGRRGSINGKLILKGVQGHVAYPQKCQNPIDTLASVLPLISGVHLDNGDECFDPSKLVITNLHAGLGANNVTPGSVEIAFNARHSLKTTQESLKEYLEKVLKDLPYTLELESSSSPFITASHSKLTSVLQENILKTCHTTPLLNTKGGTSDARFFSAHGIEVVEFGAINDRIHAVDERVSLKELELLEKVFLGVLEGLSEK</sequence>
<gene>
    <name evidence="1" type="primary">dapE</name>
    <name type="ordered locus">jhp_0198</name>
</gene>
<comment type="function">
    <text evidence="1">Catalyzes the hydrolysis of N-succinyl-L,L-diaminopimelic acid (SDAP), forming succinate and LL-2,6-diaminopimelate (DAP), an intermediate involved in the bacterial biosynthesis of lysine and meso-diaminopimelic acid, an essential component of bacterial cell walls.</text>
</comment>
<comment type="catalytic activity">
    <reaction evidence="1">
        <text>N-succinyl-(2S,6S)-2,6-diaminopimelate + H2O = (2S,6S)-2,6-diaminopimelate + succinate</text>
        <dbReference type="Rhea" id="RHEA:22608"/>
        <dbReference type="ChEBI" id="CHEBI:15377"/>
        <dbReference type="ChEBI" id="CHEBI:30031"/>
        <dbReference type="ChEBI" id="CHEBI:57609"/>
        <dbReference type="ChEBI" id="CHEBI:58087"/>
        <dbReference type="EC" id="3.5.1.18"/>
    </reaction>
</comment>
<comment type="cofactor">
    <cofactor evidence="1">
        <name>Zn(2+)</name>
        <dbReference type="ChEBI" id="CHEBI:29105"/>
    </cofactor>
    <cofactor evidence="1">
        <name>Co(2+)</name>
        <dbReference type="ChEBI" id="CHEBI:48828"/>
    </cofactor>
    <text evidence="1">Binds 2 Zn(2+) or Co(2+) ions per subunit.</text>
</comment>
<comment type="pathway">
    <text evidence="1">Amino-acid biosynthesis; L-lysine biosynthesis via DAP pathway; LL-2,6-diaminopimelate from (S)-tetrahydrodipicolinate (succinylase route): step 3/3.</text>
</comment>
<comment type="subunit">
    <text evidence="1">Homodimer.</text>
</comment>
<comment type="similarity">
    <text evidence="1">Belongs to the peptidase M20A family. DapE subfamily.</text>
</comment>
<organism>
    <name type="scientific">Helicobacter pylori (strain J99 / ATCC 700824)</name>
    <name type="common">Campylobacter pylori J99</name>
    <dbReference type="NCBI Taxonomy" id="85963"/>
    <lineage>
        <taxon>Bacteria</taxon>
        <taxon>Pseudomonadati</taxon>
        <taxon>Campylobacterota</taxon>
        <taxon>Epsilonproteobacteria</taxon>
        <taxon>Campylobacterales</taxon>
        <taxon>Helicobacteraceae</taxon>
        <taxon>Helicobacter</taxon>
    </lineage>
</organism>
<keyword id="KW-0028">Amino-acid biosynthesis</keyword>
<keyword id="KW-0170">Cobalt</keyword>
<keyword id="KW-0220">Diaminopimelate biosynthesis</keyword>
<keyword id="KW-0378">Hydrolase</keyword>
<keyword id="KW-0457">Lysine biosynthesis</keyword>
<keyword id="KW-0479">Metal-binding</keyword>
<keyword id="KW-0862">Zinc</keyword>
<evidence type="ECO:0000255" key="1">
    <source>
        <dbReference type="HAMAP-Rule" id="MF_01690"/>
    </source>
</evidence>
<name>DAPE_HELPJ</name>
<dbReference type="EC" id="3.5.1.18" evidence="1"/>
<dbReference type="EMBL" id="AE001439">
    <property type="protein sequence ID" value="AAD05782.1"/>
    <property type="molecule type" value="Genomic_DNA"/>
</dbReference>
<dbReference type="PIR" id="C71961">
    <property type="entry name" value="C71961"/>
</dbReference>
<dbReference type="RefSeq" id="WP_000339167.1">
    <property type="nucleotide sequence ID" value="NC_000921.1"/>
</dbReference>
<dbReference type="SMR" id="Q9ZMM0"/>
<dbReference type="KEGG" id="hpj:jhp_0198"/>
<dbReference type="PATRIC" id="fig|85963.30.peg.820"/>
<dbReference type="eggNOG" id="COG0624">
    <property type="taxonomic scope" value="Bacteria"/>
</dbReference>
<dbReference type="UniPathway" id="UPA00034">
    <property type="reaction ID" value="UER00021"/>
</dbReference>
<dbReference type="Proteomes" id="UP000000804">
    <property type="component" value="Chromosome"/>
</dbReference>
<dbReference type="GO" id="GO:0008777">
    <property type="term" value="F:acetylornithine deacetylase activity"/>
    <property type="evidence" value="ECO:0007669"/>
    <property type="project" value="TreeGrafter"/>
</dbReference>
<dbReference type="GO" id="GO:0046872">
    <property type="term" value="F:metal ion binding"/>
    <property type="evidence" value="ECO:0007669"/>
    <property type="project" value="UniProtKB-KW"/>
</dbReference>
<dbReference type="GO" id="GO:0009014">
    <property type="term" value="F:succinyl-diaminopimelate desuccinylase activity"/>
    <property type="evidence" value="ECO:0007669"/>
    <property type="project" value="UniProtKB-EC"/>
</dbReference>
<dbReference type="GO" id="GO:0019877">
    <property type="term" value="P:diaminopimelate biosynthetic process"/>
    <property type="evidence" value="ECO:0007669"/>
    <property type="project" value="UniProtKB-KW"/>
</dbReference>
<dbReference type="GO" id="GO:0006526">
    <property type="term" value="P:L-arginine biosynthetic process"/>
    <property type="evidence" value="ECO:0007669"/>
    <property type="project" value="TreeGrafter"/>
</dbReference>
<dbReference type="GO" id="GO:0009089">
    <property type="term" value="P:lysine biosynthetic process via diaminopimelate"/>
    <property type="evidence" value="ECO:0007669"/>
    <property type="project" value="UniProtKB-UniPathway"/>
</dbReference>
<dbReference type="CDD" id="cd03891">
    <property type="entry name" value="M20_DapE_proteobac"/>
    <property type="match status" value="1"/>
</dbReference>
<dbReference type="FunFam" id="3.30.70.360:FF:000011">
    <property type="entry name" value="Succinyl-diaminopimelate desuccinylase"/>
    <property type="match status" value="1"/>
</dbReference>
<dbReference type="FunFam" id="3.40.630.10:FF:000126">
    <property type="entry name" value="Succinyl-diaminopimelate desuccinylase"/>
    <property type="match status" value="1"/>
</dbReference>
<dbReference type="Gene3D" id="3.40.630.10">
    <property type="entry name" value="Zn peptidases"/>
    <property type="match status" value="2"/>
</dbReference>
<dbReference type="HAMAP" id="MF_01690">
    <property type="entry name" value="DapE"/>
    <property type="match status" value="1"/>
</dbReference>
<dbReference type="InterPro" id="IPR001261">
    <property type="entry name" value="ArgE/DapE_CS"/>
</dbReference>
<dbReference type="InterPro" id="IPR036264">
    <property type="entry name" value="Bact_exopeptidase_dim_dom"/>
</dbReference>
<dbReference type="InterPro" id="IPR005941">
    <property type="entry name" value="DapE_proteobac"/>
</dbReference>
<dbReference type="InterPro" id="IPR002933">
    <property type="entry name" value="Peptidase_M20"/>
</dbReference>
<dbReference type="InterPro" id="IPR011650">
    <property type="entry name" value="Peptidase_M20_dimer"/>
</dbReference>
<dbReference type="InterPro" id="IPR050072">
    <property type="entry name" value="Peptidase_M20A"/>
</dbReference>
<dbReference type="NCBIfam" id="TIGR01246">
    <property type="entry name" value="dapE_proteo"/>
    <property type="match status" value="1"/>
</dbReference>
<dbReference type="NCBIfam" id="NF009557">
    <property type="entry name" value="PRK13009.1"/>
    <property type="match status" value="1"/>
</dbReference>
<dbReference type="PANTHER" id="PTHR43808">
    <property type="entry name" value="ACETYLORNITHINE DEACETYLASE"/>
    <property type="match status" value="1"/>
</dbReference>
<dbReference type="PANTHER" id="PTHR43808:SF31">
    <property type="entry name" value="N-ACETYL-L-CITRULLINE DEACETYLASE"/>
    <property type="match status" value="1"/>
</dbReference>
<dbReference type="Pfam" id="PF07687">
    <property type="entry name" value="M20_dimer"/>
    <property type="match status" value="1"/>
</dbReference>
<dbReference type="Pfam" id="PF01546">
    <property type="entry name" value="Peptidase_M20"/>
    <property type="match status" value="1"/>
</dbReference>
<dbReference type="SUPFAM" id="SSF55031">
    <property type="entry name" value="Bacterial exopeptidase dimerisation domain"/>
    <property type="match status" value="1"/>
</dbReference>
<dbReference type="SUPFAM" id="SSF53187">
    <property type="entry name" value="Zn-dependent exopeptidases"/>
    <property type="match status" value="1"/>
</dbReference>
<dbReference type="PROSITE" id="PS00759">
    <property type="entry name" value="ARGE_DAPE_CPG2_2"/>
    <property type="match status" value="1"/>
</dbReference>
<proteinExistence type="inferred from homology"/>
<protein>
    <recommendedName>
        <fullName evidence="1">Succinyl-diaminopimelate desuccinylase</fullName>
        <shortName evidence="1">SDAP desuccinylase</shortName>
        <ecNumber evidence="1">3.5.1.18</ecNumber>
    </recommendedName>
    <alternativeName>
        <fullName evidence="1">N-succinyl-LL-2,6-diaminoheptanedioate amidohydrolase</fullName>
    </alternativeName>
</protein>